<dbReference type="EMBL" id="AE000666">
    <property type="protein sequence ID" value="AAB85518.1"/>
    <property type="molecule type" value="Genomic_DNA"/>
</dbReference>
<dbReference type="PIR" id="D69003">
    <property type="entry name" value="D69003"/>
</dbReference>
<dbReference type="RefSeq" id="WP_010876653.1">
    <property type="nucleotide sequence ID" value="NC_000916.1"/>
</dbReference>
<dbReference type="SMR" id="O27101"/>
<dbReference type="STRING" id="187420.MTH_1022"/>
<dbReference type="PaxDb" id="187420-MTH_1022"/>
<dbReference type="EnsemblBacteria" id="AAB85518">
    <property type="protein sequence ID" value="AAB85518"/>
    <property type="gene ID" value="MTH_1022"/>
</dbReference>
<dbReference type="KEGG" id="mth:MTH_1022"/>
<dbReference type="PATRIC" id="fig|187420.15.peg.1005"/>
<dbReference type="HOGENOM" id="CLU_996096_0_0_2"/>
<dbReference type="InParanoid" id="O27101"/>
<dbReference type="Proteomes" id="UP000005223">
    <property type="component" value="Chromosome"/>
</dbReference>
<dbReference type="GO" id="GO:0005886">
    <property type="term" value="C:plasma membrane"/>
    <property type="evidence" value="ECO:0007669"/>
    <property type="project" value="UniProtKB-SubCell"/>
</dbReference>
<dbReference type="GO" id="GO:0017038">
    <property type="term" value="P:protein import"/>
    <property type="evidence" value="ECO:0007669"/>
    <property type="project" value="TreeGrafter"/>
</dbReference>
<dbReference type="InterPro" id="IPR050790">
    <property type="entry name" value="ExbB/TolQ_transport"/>
</dbReference>
<dbReference type="InterPro" id="IPR002898">
    <property type="entry name" value="MotA_ExbB_proton_chnl"/>
</dbReference>
<dbReference type="PANTHER" id="PTHR30625:SF15">
    <property type="entry name" value="BIOPOLYMER TRANSPORT PROTEIN EXBB"/>
    <property type="match status" value="1"/>
</dbReference>
<dbReference type="PANTHER" id="PTHR30625">
    <property type="entry name" value="PROTEIN TOLQ"/>
    <property type="match status" value="1"/>
</dbReference>
<dbReference type="Pfam" id="PF01618">
    <property type="entry name" value="MotA_ExbB"/>
    <property type="match status" value="1"/>
</dbReference>
<organism>
    <name type="scientific">Methanothermobacter thermautotrophicus (strain ATCC 29096 / DSM 1053 / JCM 10044 / NBRC 100330 / Delta H)</name>
    <name type="common">Methanobacterium thermoautotrophicum</name>
    <dbReference type="NCBI Taxonomy" id="187420"/>
    <lineage>
        <taxon>Archaea</taxon>
        <taxon>Methanobacteriati</taxon>
        <taxon>Methanobacteriota</taxon>
        <taxon>Methanomada group</taxon>
        <taxon>Methanobacteria</taxon>
        <taxon>Methanobacteriales</taxon>
        <taxon>Methanobacteriaceae</taxon>
        <taxon>Methanothermobacter</taxon>
    </lineage>
</organism>
<feature type="chain" id="PRO_0000145827" description="Putative biopolymer transport protein ExbB homolog">
    <location>
        <begin position="1"/>
        <end position="279"/>
    </location>
</feature>
<feature type="transmembrane region" description="Helical" evidence="1">
    <location>
        <begin position="19"/>
        <end position="39"/>
    </location>
</feature>
<feature type="transmembrane region" description="Helical" evidence="1">
    <location>
        <begin position="126"/>
        <end position="146"/>
    </location>
</feature>
<feature type="transmembrane region" description="Helical" evidence="1">
    <location>
        <begin position="162"/>
        <end position="182"/>
    </location>
</feature>
<proteinExistence type="inferred from homology"/>
<gene>
    <name type="ordered locus">MTH_1022</name>
</gene>
<comment type="subcellular location">
    <subcellularLocation>
        <location evidence="2">Cell membrane</location>
        <topology evidence="2">Multi-pass membrane protein</topology>
    </subcellularLocation>
</comment>
<comment type="similarity">
    <text evidence="2">Belongs to the ExbB/TolQ family.</text>
</comment>
<keyword id="KW-1003">Cell membrane</keyword>
<keyword id="KW-0472">Membrane</keyword>
<keyword id="KW-0653">Protein transport</keyword>
<keyword id="KW-1185">Reference proteome</keyword>
<keyword id="KW-0812">Transmembrane</keyword>
<keyword id="KW-1133">Transmembrane helix</keyword>
<keyword id="KW-0813">Transport</keyword>
<accession>O27101</accession>
<sequence length="279" mass="30742">MFLDPVINFFGTVLEMFRSGGVITYLIAAIGIYGFITALEKIHYLRKISRVSTPQIIGAVNESMEKGGALEALREIGQYQNPVSKIISEALKIGYRNRSEVEDAMERVFIVEMSNMTRGLGTLRTIIEVAPMLGLIGTVIGIWYTFRALGVNADPAAMAEGIYVALITTILGLAVAIILMPLYSYITGRIDDEIDKIELIKKMTNWGYAVMRISVEGNVDDVVKALMESDGVVSVRVVDEPDANVVVAFKPSMLEKSINNIIIERCGKSAEIIESKLRQ</sequence>
<protein>
    <recommendedName>
        <fullName>Putative biopolymer transport protein ExbB homolog</fullName>
    </recommendedName>
</protein>
<reference key="1">
    <citation type="journal article" date="1997" name="J. Bacteriol.">
        <title>Complete genome sequence of Methanobacterium thermoautotrophicum deltaH: functional analysis and comparative genomics.</title>
        <authorList>
            <person name="Smith D.R."/>
            <person name="Doucette-Stamm L.A."/>
            <person name="Deloughery C."/>
            <person name="Lee H.-M."/>
            <person name="Dubois J."/>
            <person name="Aldredge T."/>
            <person name="Bashirzadeh R."/>
            <person name="Blakely D."/>
            <person name="Cook R."/>
            <person name="Gilbert K."/>
            <person name="Harrison D."/>
            <person name="Hoang L."/>
            <person name="Keagle P."/>
            <person name="Lumm W."/>
            <person name="Pothier B."/>
            <person name="Qiu D."/>
            <person name="Spadafora R."/>
            <person name="Vicare R."/>
            <person name="Wang Y."/>
            <person name="Wierzbowski J."/>
            <person name="Gibson R."/>
            <person name="Jiwani N."/>
            <person name="Caruso A."/>
            <person name="Bush D."/>
            <person name="Safer H."/>
            <person name="Patwell D."/>
            <person name="Prabhakar S."/>
            <person name="McDougall S."/>
            <person name="Shimer G."/>
            <person name="Goyal A."/>
            <person name="Pietrovski S."/>
            <person name="Church G.M."/>
            <person name="Daniels C.J."/>
            <person name="Mao J.-I."/>
            <person name="Rice P."/>
            <person name="Noelling J."/>
            <person name="Reeve J.N."/>
        </authorList>
    </citation>
    <scope>NUCLEOTIDE SEQUENCE [LARGE SCALE GENOMIC DNA]</scope>
    <source>
        <strain>ATCC 29096 / DSM 1053 / JCM 10044 / NBRC 100330 / Delta H</strain>
    </source>
</reference>
<evidence type="ECO:0000255" key="1"/>
<evidence type="ECO:0000305" key="2"/>
<name>Y1022_METTH</name>